<evidence type="ECO:0000255" key="1">
    <source>
        <dbReference type="HAMAP-Rule" id="MF_00181"/>
    </source>
</evidence>
<protein>
    <recommendedName>
        <fullName evidence="1">Probable cytosol aminopeptidase</fullName>
        <ecNumber evidence="1">3.4.11.1</ecNumber>
    </recommendedName>
    <alternativeName>
        <fullName evidence="1">Leucine aminopeptidase</fullName>
        <shortName evidence="1">LAP</shortName>
        <ecNumber evidence="1">3.4.11.10</ecNumber>
    </alternativeName>
    <alternativeName>
        <fullName evidence="1">Leucyl aminopeptidase</fullName>
    </alternativeName>
</protein>
<organism>
    <name type="scientific">Streptomyces coelicolor (strain ATCC BAA-471 / A3(2) / M145)</name>
    <dbReference type="NCBI Taxonomy" id="100226"/>
    <lineage>
        <taxon>Bacteria</taxon>
        <taxon>Bacillati</taxon>
        <taxon>Actinomycetota</taxon>
        <taxon>Actinomycetes</taxon>
        <taxon>Kitasatosporales</taxon>
        <taxon>Streptomycetaceae</taxon>
        <taxon>Streptomyces</taxon>
        <taxon>Streptomyces albidoflavus group</taxon>
    </lineage>
</organism>
<proteinExistence type="inferred from homology"/>
<reference key="1">
    <citation type="journal article" date="2002" name="Nature">
        <title>Complete genome sequence of the model actinomycete Streptomyces coelicolor A3(2).</title>
        <authorList>
            <person name="Bentley S.D."/>
            <person name="Chater K.F."/>
            <person name="Cerdeno-Tarraga A.-M."/>
            <person name="Challis G.L."/>
            <person name="Thomson N.R."/>
            <person name="James K.D."/>
            <person name="Harris D.E."/>
            <person name="Quail M.A."/>
            <person name="Kieser H."/>
            <person name="Harper D."/>
            <person name="Bateman A."/>
            <person name="Brown S."/>
            <person name="Chandra G."/>
            <person name="Chen C.W."/>
            <person name="Collins M."/>
            <person name="Cronin A."/>
            <person name="Fraser A."/>
            <person name="Goble A."/>
            <person name="Hidalgo J."/>
            <person name="Hornsby T."/>
            <person name="Howarth S."/>
            <person name="Huang C.-H."/>
            <person name="Kieser T."/>
            <person name="Larke L."/>
            <person name="Murphy L.D."/>
            <person name="Oliver K."/>
            <person name="O'Neil S."/>
            <person name="Rabbinowitsch E."/>
            <person name="Rajandream M.A."/>
            <person name="Rutherford K.M."/>
            <person name="Rutter S."/>
            <person name="Seeger K."/>
            <person name="Saunders D."/>
            <person name="Sharp S."/>
            <person name="Squares R."/>
            <person name="Squares S."/>
            <person name="Taylor K."/>
            <person name="Warren T."/>
            <person name="Wietzorrek A."/>
            <person name="Woodward J.R."/>
            <person name="Barrell B.G."/>
            <person name="Parkhill J."/>
            <person name="Hopwood D.A."/>
        </authorList>
    </citation>
    <scope>NUCLEOTIDE SEQUENCE [LARGE SCALE GENOMIC DNA]</scope>
    <source>
        <strain>ATCC BAA-471 / A3(2) / M145</strain>
    </source>
</reference>
<gene>
    <name evidence="1" type="primary">pepA</name>
    <name type="ordered locus">SCO2179</name>
    <name type="ORF">SC5F7.22</name>
</gene>
<sequence length="517" mass="51997">MTALTLSTAAAPGLRADAIVIGVAKGAGGPSVAPGAEAVDKAYDGRLAAVLETLGASGAEGEVTKLPAPSGFKAPVVVAVGLGAEPEKDAGFDPEALRRAAGAAARALAGAKKAAFALPLAEAADAGVVAEGLLLGAYSFDAYKASAKEAKEAKGAKAKANGNGKAPLAEAALLGGKPRDKAYKAAIERATAVAEELNRARDLVNTPPNDLDPEAFAAVAQAAAKEHGIKVQVLDEKALVKGGYGGILGVGAGSASGPRLVKLSYTSPKAKKSLAFVGKGITYDSGGISLKPAGHNETMKCDMAGAAAVFAAVVAAARLGLEVNVTGWLALAENMPSGSATRPGDVLRMYSGKTVEVLNTDAEGRLVLADALWAASQDEPDAIIDVATLTGAMMLALGSRTYGIMANDDAFRSAVHEAAEESGEPAWPMPLPEHLRKGMDSPTADIANMGERMGGGLVAGLFLREFVGEGITWAHLDIAGPAFNEGGPFGYTPKGGTGTAVRTLVRVAELAAAGELG</sequence>
<feature type="chain" id="PRO_0000165800" description="Probable cytosol aminopeptidase">
    <location>
        <begin position="1"/>
        <end position="517"/>
    </location>
</feature>
<feature type="active site" evidence="1">
    <location>
        <position position="291"/>
    </location>
</feature>
<feature type="active site" evidence="1">
    <location>
        <position position="365"/>
    </location>
</feature>
<feature type="binding site" evidence="1">
    <location>
        <position position="279"/>
    </location>
    <ligand>
        <name>Mn(2+)</name>
        <dbReference type="ChEBI" id="CHEBI:29035"/>
        <label>2</label>
    </ligand>
</feature>
<feature type="binding site" evidence="1">
    <location>
        <position position="284"/>
    </location>
    <ligand>
        <name>Mn(2+)</name>
        <dbReference type="ChEBI" id="CHEBI:29035"/>
        <label>1</label>
    </ligand>
</feature>
<feature type="binding site" evidence="1">
    <location>
        <position position="284"/>
    </location>
    <ligand>
        <name>Mn(2+)</name>
        <dbReference type="ChEBI" id="CHEBI:29035"/>
        <label>2</label>
    </ligand>
</feature>
<feature type="binding site" evidence="1">
    <location>
        <position position="302"/>
    </location>
    <ligand>
        <name>Mn(2+)</name>
        <dbReference type="ChEBI" id="CHEBI:29035"/>
        <label>2</label>
    </ligand>
</feature>
<feature type="binding site" evidence="1">
    <location>
        <position position="361"/>
    </location>
    <ligand>
        <name>Mn(2+)</name>
        <dbReference type="ChEBI" id="CHEBI:29035"/>
        <label>1</label>
    </ligand>
</feature>
<feature type="binding site" evidence="1">
    <location>
        <position position="363"/>
    </location>
    <ligand>
        <name>Mn(2+)</name>
        <dbReference type="ChEBI" id="CHEBI:29035"/>
        <label>1</label>
    </ligand>
</feature>
<feature type="binding site" evidence="1">
    <location>
        <position position="363"/>
    </location>
    <ligand>
        <name>Mn(2+)</name>
        <dbReference type="ChEBI" id="CHEBI:29035"/>
        <label>2</label>
    </ligand>
</feature>
<comment type="function">
    <text evidence="1">Presumably involved in the processing and regular turnover of intracellular proteins. Catalyzes the removal of unsubstituted N-terminal amino acids from various peptides.</text>
</comment>
<comment type="catalytic activity">
    <reaction evidence="1">
        <text>Release of an N-terminal amino acid, Xaa-|-Yaa-, in which Xaa is preferably Leu, but may be other amino acids including Pro although not Arg or Lys, and Yaa may be Pro. Amino acid amides and methyl esters are also readily hydrolyzed, but rates on arylamides are exceedingly low.</text>
        <dbReference type="EC" id="3.4.11.1"/>
    </reaction>
</comment>
<comment type="catalytic activity">
    <reaction evidence="1">
        <text>Release of an N-terminal amino acid, preferentially leucine, but not glutamic or aspartic acids.</text>
        <dbReference type="EC" id="3.4.11.10"/>
    </reaction>
</comment>
<comment type="cofactor">
    <cofactor evidence="1">
        <name>Mn(2+)</name>
        <dbReference type="ChEBI" id="CHEBI:29035"/>
    </cofactor>
    <text evidence="1">Binds 2 manganese ions per subunit.</text>
</comment>
<comment type="subcellular location">
    <subcellularLocation>
        <location evidence="1">Cytoplasm</location>
    </subcellularLocation>
</comment>
<comment type="similarity">
    <text evidence="1">Belongs to the peptidase M17 family.</text>
</comment>
<dbReference type="EC" id="3.4.11.1" evidence="1"/>
<dbReference type="EC" id="3.4.11.10" evidence="1"/>
<dbReference type="EMBL" id="AL939111">
    <property type="protein sequence ID" value="CAB51263.1"/>
    <property type="molecule type" value="Genomic_DNA"/>
</dbReference>
<dbReference type="PIR" id="T35295">
    <property type="entry name" value="T35295"/>
</dbReference>
<dbReference type="RefSeq" id="NP_626432.1">
    <property type="nucleotide sequence ID" value="NC_003888.3"/>
</dbReference>
<dbReference type="RefSeq" id="WP_011028182.1">
    <property type="nucleotide sequence ID" value="NZ_VNID01000001.1"/>
</dbReference>
<dbReference type="SMR" id="Q9S2Q7"/>
<dbReference type="FunCoup" id="Q9S2Q7">
    <property type="interactions" value="363"/>
</dbReference>
<dbReference type="STRING" id="100226.gene:17759776"/>
<dbReference type="PaxDb" id="100226-SCO2179"/>
<dbReference type="KEGG" id="sco:SCO2179"/>
<dbReference type="PATRIC" id="fig|100226.15.peg.2217"/>
<dbReference type="eggNOG" id="COG0260">
    <property type="taxonomic scope" value="Bacteria"/>
</dbReference>
<dbReference type="HOGENOM" id="CLU_013734_2_2_11"/>
<dbReference type="InParanoid" id="Q9S2Q7"/>
<dbReference type="OrthoDB" id="9809354at2"/>
<dbReference type="PhylomeDB" id="Q9S2Q7"/>
<dbReference type="Proteomes" id="UP000001973">
    <property type="component" value="Chromosome"/>
</dbReference>
<dbReference type="GO" id="GO:0005737">
    <property type="term" value="C:cytoplasm"/>
    <property type="evidence" value="ECO:0000318"/>
    <property type="project" value="GO_Central"/>
</dbReference>
<dbReference type="GO" id="GO:0030145">
    <property type="term" value="F:manganese ion binding"/>
    <property type="evidence" value="ECO:0007669"/>
    <property type="project" value="UniProtKB-UniRule"/>
</dbReference>
<dbReference type="GO" id="GO:0070006">
    <property type="term" value="F:metalloaminopeptidase activity"/>
    <property type="evidence" value="ECO:0007669"/>
    <property type="project" value="InterPro"/>
</dbReference>
<dbReference type="GO" id="GO:0008233">
    <property type="term" value="F:peptidase activity"/>
    <property type="evidence" value="ECO:0000318"/>
    <property type="project" value="GO_Central"/>
</dbReference>
<dbReference type="GO" id="GO:0006508">
    <property type="term" value="P:proteolysis"/>
    <property type="evidence" value="ECO:0000318"/>
    <property type="project" value="GO_Central"/>
</dbReference>
<dbReference type="CDD" id="cd00433">
    <property type="entry name" value="Peptidase_M17"/>
    <property type="match status" value="1"/>
</dbReference>
<dbReference type="Gene3D" id="3.40.220.10">
    <property type="entry name" value="Leucine Aminopeptidase, subunit E, domain 1"/>
    <property type="match status" value="1"/>
</dbReference>
<dbReference type="Gene3D" id="3.40.630.10">
    <property type="entry name" value="Zn peptidases"/>
    <property type="match status" value="1"/>
</dbReference>
<dbReference type="HAMAP" id="MF_00181">
    <property type="entry name" value="Cytosol_peptidase_M17"/>
    <property type="match status" value="1"/>
</dbReference>
<dbReference type="InterPro" id="IPR011356">
    <property type="entry name" value="Leucine_aapep/pepB"/>
</dbReference>
<dbReference type="InterPro" id="IPR043472">
    <property type="entry name" value="Macro_dom-like"/>
</dbReference>
<dbReference type="InterPro" id="IPR000819">
    <property type="entry name" value="Peptidase_M17_C"/>
</dbReference>
<dbReference type="InterPro" id="IPR023042">
    <property type="entry name" value="Peptidase_M17_leu_NH2_pept"/>
</dbReference>
<dbReference type="InterPro" id="IPR008283">
    <property type="entry name" value="Peptidase_M17_N"/>
</dbReference>
<dbReference type="NCBIfam" id="NF002073">
    <property type="entry name" value="PRK00913.1-2"/>
    <property type="match status" value="1"/>
</dbReference>
<dbReference type="PANTHER" id="PTHR11963:SF23">
    <property type="entry name" value="CYTOSOL AMINOPEPTIDASE"/>
    <property type="match status" value="1"/>
</dbReference>
<dbReference type="PANTHER" id="PTHR11963">
    <property type="entry name" value="LEUCINE AMINOPEPTIDASE-RELATED"/>
    <property type="match status" value="1"/>
</dbReference>
<dbReference type="Pfam" id="PF00883">
    <property type="entry name" value="Peptidase_M17"/>
    <property type="match status" value="1"/>
</dbReference>
<dbReference type="Pfam" id="PF02789">
    <property type="entry name" value="Peptidase_M17_N"/>
    <property type="match status" value="1"/>
</dbReference>
<dbReference type="PRINTS" id="PR00481">
    <property type="entry name" value="LAMNOPPTDASE"/>
</dbReference>
<dbReference type="SUPFAM" id="SSF52949">
    <property type="entry name" value="Macro domain-like"/>
    <property type="match status" value="1"/>
</dbReference>
<dbReference type="SUPFAM" id="SSF53187">
    <property type="entry name" value="Zn-dependent exopeptidases"/>
    <property type="match status" value="1"/>
</dbReference>
<dbReference type="PROSITE" id="PS00631">
    <property type="entry name" value="CYTOSOL_AP"/>
    <property type="match status" value="1"/>
</dbReference>
<keyword id="KW-0031">Aminopeptidase</keyword>
<keyword id="KW-0963">Cytoplasm</keyword>
<keyword id="KW-0378">Hydrolase</keyword>
<keyword id="KW-0464">Manganese</keyword>
<keyword id="KW-0479">Metal-binding</keyword>
<keyword id="KW-0645">Protease</keyword>
<keyword id="KW-1185">Reference proteome</keyword>
<name>AMPA_STRCO</name>
<accession>Q9S2Q7</accession>